<keyword id="KW-0028">Amino-acid biosynthesis</keyword>
<keyword id="KW-0055">Arginine biosynthesis</keyword>
<keyword id="KW-0456">Lyase</keyword>
<gene>
    <name type="primary">ARG4</name>
</gene>
<sequence>MSQQQDKQPSENKLWGGRFTGATDPLMDLYNASLPYDKVMYDADLTGTKVYTQGLNKLGLITTEELNLIHQGLEQIRQEWHDNKFIIKAGDEDIHTANERRLGEIIGKNISGKVHTGRSRNDQVATDMRIFVRESLLNLSKILHQFITAILERAHKEIDVLMPGYTHLQKAQPIRWAHWLSSYATYFTEDYKRLQEIITRVNQSPLGSGALAGHPYGIDREFLAKGLGFDGVIGNSLTAVSDRDFVVESLFWSTLFMNHISRFSEDLIIYSSGEFGFIKLADAYSTGSSLMPQKKNPDSLELLRGKSGRVFGQLSGFLMSIKSIPSTYNKDMQEDKEPLFDALTTVEHSILIATGVISTLSIDKQNMEKALTMDMLATDLADYLVRKGVPFRETHHISGECVRKAEEEKLSGIDQLSFEQFQQIDSRFEKDVMETFDFEASVERRDALGGTAKSAVLKQLENLKSILS</sequence>
<dbReference type="EC" id="4.3.2.1"/>
<dbReference type="EMBL" id="L25051">
    <property type="protein sequence ID" value="AAA34323.2"/>
    <property type="molecule type" value="Genomic_DNA"/>
</dbReference>
<dbReference type="SMR" id="P43061"/>
<dbReference type="VEuPathDB" id="FungiDB:C7_03570W_A"/>
<dbReference type="VEuPathDB" id="FungiDB:CAWG_05688"/>
<dbReference type="UniPathway" id="UPA00068">
    <property type="reaction ID" value="UER00114"/>
</dbReference>
<dbReference type="GO" id="GO:0005829">
    <property type="term" value="C:cytosol"/>
    <property type="evidence" value="ECO:0007669"/>
    <property type="project" value="TreeGrafter"/>
</dbReference>
<dbReference type="GO" id="GO:0004056">
    <property type="term" value="F:argininosuccinate lyase activity"/>
    <property type="evidence" value="ECO:0007669"/>
    <property type="project" value="UniProtKB-EC"/>
</dbReference>
<dbReference type="GO" id="GO:0042450">
    <property type="term" value="P:arginine biosynthetic process via ornithine"/>
    <property type="evidence" value="ECO:0007669"/>
    <property type="project" value="InterPro"/>
</dbReference>
<dbReference type="GO" id="GO:0006526">
    <property type="term" value="P:L-arginine biosynthetic process"/>
    <property type="evidence" value="ECO:0007669"/>
    <property type="project" value="UniProtKB-UniPathway"/>
</dbReference>
<dbReference type="CDD" id="cd01359">
    <property type="entry name" value="Argininosuccinate_lyase"/>
    <property type="match status" value="1"/>
</dbReference>
<dbReference type="FunFam" id="1.10.275.10:FF:000002">
    <property type="entry name" value="Argininosuccinate lyase"/>
    <property type="match status" value="1"/>
</dbReference>
<dbReference type="FunFam" id="1.10.40.30:FF:000001">
    <property type="entry name" value="Argininosuccinate lyase"/>
    <property type="match status" value="1"/>
</dbReference>
<dbReference type="FunFam" id="1.20.200.10:FF:000002">
    <property type="entry name" value="Argininosuccinate lyase"/>
    <property type="match status" value="1"/>
</dbReference>
<dbReference type="Gene3D" id="1.10.40.30">
    <property type="entry name" value="Fumarase/aspartase (C-terminal domain)"/>
    <property type="match status" value="1"/>
</dbReference>
<dbReference type="Gene3D" id="1.20.200.10">
    <property type="entry name" value="Fumarase/aspartase (Central domain)"/>
    <property type="match status" value="1"/>
</dbReference>
<dbReference type="Gene3D" id="1.10.275.10">
    <property type="entry name" value="Fumarase/aspartase (N-terminal domain)"/>
    <property type="match status" value="1"/>
</dbReference>
<dbReference type="HAMAP" id="MF_00006">
    <property type="entry name" value="Arg_succ_lyase"/>
    <property type="match status" value="1"/>
</dbReference>
<dbReference type="InterPro" id="IPR029419">
    <property type="entry name" value="Arg_succ_lyase_C"/>
</dbReference>
<dbReference type="InterPro" id="IPR009049">
    <property type="entry name" value="Argininosuccinate_lyase"/>
</dbReference>
<dbReference type="InterPro" id="IPR024083">
    <property type="entry name" value="Fumarase/histidase_N"/>
</dbReference>
<dbReference type="InterPro" id="IPR020557">
    <property type="entry name" value="Fumarate_lyase_CS"/>
</dbReference>
<dbReference type="InterPro" id="IPR000362">
    <property type="entry name" value="Fumarate_lyase_fam"/>
</dbReference>
<dbReference type="InterPro" id="IPR022761">
    <property type="entry name" value="Fumarate_lyase_N"/>
</dbReference>
<dbReference type="InterPro" id="IPR008948">
    <property type="entry name" value="L-Aspartase-like"/>
</dbReference>
<dbReference type="NCBIfam" id="TIGR00838">
    <property type="entry name" value="argH"/>
    <property type="match status" value="1"/>
</dbReference>
<dbReference type="PANTHER" id="PTHR43814">
    <property type="entry name" value="ARGININOSUCCINATE LYASE"/>
    <property type="match status" value="1"/>
</dbReference>
<dbReference type="PANTHER" id="PTHR43814:SF1">
    <property type="entry name" value="ARGININOSUCCINATE LYASE"/>
    <property type="match status" value="1"/>
</dbReference>
<dbReference type="Pfam" id="PF14698">
    <property type="entry name" value="ASL_C2"/>
    <property type="match status" value="1"/>
</dbReference>
<dbReference type="Pfam" id="PF00206">
    <property type="entry name" value="Lyase_1"/>
    <property type="match status" value="1"/>
</dbReference>
<dbReference type="PRINTS" id="PR00145">
    <property type="entry name" value="ARGSUCLYASE"/>
</dbReference>
<dbReference type="PRINTS" id="PR00149">
    <property type="entry name" value="FUMRATELYASE"/>
</dbReference>
<dbReference type="SUPFAM" id="SSF48557">
    <property type="entry name" value="L-aspartase-like"/>
    <property type="match status" value="1"/>
</dbReference>
<dbReference type="PROSITE" id="PS00163">
    <property type="entry name" value="FUMARATE_LYASES"/>
    <property type="match status" value="1"/>
</dbReference>
<proteinExistence type="inferred from homology"/>
<name>ARLY_CANAX</name>
<feature type="chain" id="PRO_0000137724" description="Argininosuccinate lyase">
    <location>
        <begin position="1"/>
        <end position="468"/>
    </location>
</feature>
<feature type="active site" description="Proton acceptor" evidence="2">
    <location>
        <position position="167"/>
    </location>
</feature>
<feature type="active site" description="Proton donor" evidence="2">
    <location>
        <position position="288"/>
    </location>
</feature>
<feature type="binding site" description="in chain A" evidence="2">
    <location>
        <position position="33"/>
    </location>
    <ligand>
        <name>2-(N(omega)-L-arginino)succinate</name>
        <dbReference type="ChEBI" id="CHEBI:57472"/>
        <note>ligand shared between tetrameric partners</note>
    </ligand>
</feature>
<feature type="binding site" description="in chain A" evidence="2">
    <location>
        <position position="121"/>
    </location>
    <ligand>
        <name>2-(N(omega)-L-arginino)succinate</name>
        <dbReference type="ChEBI" id="CHEBI:57472"/>
        <note>ligand shared between tetrameric partners</note>
    </ligand>
</feature>
<feature type="binding site" description="in chain C" evidence="2">
    <location>
        <position position="166"/>
    </location>
    <ligand>
        <name>2-(N(omega)-L-arginino)succinate</name>
        <dbReference type="ChEBI" id="CHEBI:57472"/>
        <note>ligand shared between tetrameric partners</note>
    </ligand>
</feature>
<feature type="binding site" description="in chain B" evidence="2">
    <location>
        <position position="296"/>
    </location>
    <ligand>
        <name>2-(N(omega)-L-arginino)succinate</name>
        <dbReference type="ChEBI" id="CHEBI:57472"/>
        <note>ligand shared between tetrameric partners</note>
    </ligand>
</feature>
<feature type="binding site" description="in chain A" evidence="2">
    <location>
        <position position="328"/>
    </location>
    <ligand>
        <name>2-(N(omega)-L-arginino)succinate</name>
        <dbReference type="ChEBI" id="CHEBI:57472"/>
        <note>ligand shared between tetrameric partners</note>
    </ligand>
</feature>
<feature type="binding site" description="in chain A" evidence="2">
    <location>
        <position position="333"/>
    </location>
    <ligand>
        <name>2-(N(omega)-L-arginino)succinate</name>
        <dbReference type="ChEBI" id="CHEBI:57472"/>
        <note>ligand shared between tetrameric partners</note>
    </ligand>
</feature>
<feature type="binding site" description="in chain A" evidence="2">
    <location>
        <position position="336"/>
    </location>
    <ligand>
        <name>2-(N(omega)-L-arginino)succinate</name>
        <dbReference type="ChEBI" id="CHEBI:57472"/>
        <note>ligand shared between tetrameric partners</note>
    </ligand>
</feature>
<feature type="site" description="Increases basicity of active site His" evidence="2">
    <location>
        <position position="301"/>
    </location>
</feature>
<evidence type="ECO:0000250" key="1"/>
<evidence type="ECO:0000250" key="2">
    <source>
        <dbReference type="UniProtKB" id="P24058"/>
    </source>
</evidence>
<evidence type="ECO:0000305" key="3"/>
<protein>
    <recommendedName>
        <fullName>Argininosuccinate lyase</fullName>
        <shortName>ASAL</shortName>
        <ecNumber>4.3.2.1</ecNumber>
    </recommendedName>
    <alternativeName>
        <fullName>Arginosuccinase</fullName>
    </alternativeName>
</protein>
<comment type="catalytic activity">
    <reaction>
        <text>2-(N(omega)-L-arginino)succinate = fumarate + L-arginine</text>
        <dbReference type="Rhea" id="RHEA:24020"/>
        <dbReference type="ChEBI" id="CHEBI:29806"/>
        <dbReference type="ChEBI" id="CHEBI:32682"/>
        <dbReference type="ChEBI" id="CHEBI:57472"/>
        <dbReference type="EC" id="4.3.2.1"/>
    </reaction>
</comment>
<comment type="pathway">
    <text>Amino-acid biosynthesis; L-arginine biosynthesis; L-arginine from L-ornithine and carbamoyl phosphate: step 3/3.</text>
</comment>
<comment type="subunit">
    <text evidence="1">Homotetramer.</text>
</comment>
<comment type="similarity">
    <text evidence="3">Belongs to the lyase 1 family. Argininosuccinate lyase subfamily.</text>
</comment>
<organism>
    <name type="scientific">Candida albicans</name>
    <name type="common">Yeast</name>
    <dbReference type="NCBI Taxonomy" id="5476"/>
    <lineage>
        <taxon>Eukaryota</taxon>
        <taxon>Fungi</taxon>
        <taxon>Dikarya</taxon>
        <taxon>Ascomycota</taxon>
        <taxon>Saccharomycotina</taxon>
        <taxon>Pichiomycetes</taxon>
        <taxon>Debaryomycetaceae</taxon>
        <taxon>Candida/Lodderomyces clade</taxon>
        <taxon>Candida</taxon>
    </lineage>
</organism>
<accession>P43061</accession>
<reference key="1">
    <citation type="journal article" date="1994" name="Gene">
        <title>The ARG4 gene of Candida albicans.</title>
        <authorList>
            <person name="Hoyer L.L."/>
            <person name="Magee B.B."/>
            <person name="Rikkerink E.H."/>
            <person name="Scherer S."/>
        </authorList>
    </citation>
    <scope>NUCLEOTIDE SEQUENCE [GENOMIC DNA]</scope>
</reference>